<name>URED_DECAR</name>
<dbReference type="EMBL" id="CP000089">
    <property type="protein sequence ID" value="AAZ46179.1"/>
    <property type="molecule type" value="Genomic_DNA"/>
</dbReference>
<dbReference type="SMR" id="Q47G52"/>
<dbReference type="STRING" id="159087.Daro_1430"/>
<dbReference type="KEGG" id="dar:Daro_1430"/>
<dbReference type="eggNOG" id="COG0829">
    <property type="taxonomic scope" value="Bacteria"/>
</dbReference>
<dbReference type="HOGENOM" id="CLU_056339_0_0_4"/>
<dbReference type="OrthoDB" id="9798842at2"/>
<dbReference type="GO" id="GO:0005737">
    <property type="term" value="C:cytoplasm"/>
    <property type="evidence" value="ECO:0007669"/>
    <property type="project" value="UniProtKB-SubCell"/>
</dbReference>
<dbReference type="GO" id="GO:0016151">
    <property type="term" value="F:nickel cation binding"/>
    <property type="evidence" value="ECO:0007669"/>
    <property type="project" value="UniProtKB-UniRule"/>
</dbReference>
<dbReference type="HAMAP" id="MF_01384">
    <property type="entry name" value="UreD"/>
    <property type="match status" value="1"/>
</dbReference>
<dbReference type="InterPro" id="IPR002669">
    <property type="entry name" value="UreD"/>
</dbReference>
<dbReference type="PANTHER" id="PTHR33643">
    <property type="entry name" value="UREASE ACCESSORY PROTEIN D"/>
    <property type="match status" value="1"/>
</dbReference>
<dbReference type="PANTHER" id="PTHR33643:SF1">
    <property type="entry name" value="UREASE ACCESSORY PROTEIN D"/>
    <property type="match status" value="1"/>
</dbReference>
<dbReference type="Pfam" id="PF01774">
    <property type="entry name" value="UreD"/>
    <property type="match status" value="1"/>
</dbReference>
<sequence length="288" mass="31295">MTSRLPISQPEHSPSWHAELHLGFARAGERTVLRENRHRGPLRVQKALYPEGEAVCQTIVLHPPSGIAGGDHLAISAEVGEGSHAQLTTPGAGKWYRSGGAEASQRVAFTVGEGATLEWLPQETIVFDGARARMETQVDLAADSRYIGWDILCLGRVAAGERFEKGRFDLFLQVNRDQRPIWIERGGFDGSDPMLISPAGWAGATVCGTLLCAFPEWPMQASALLEACRKIVPADGAQHGLSALPGVLIARYLGNSSEAARLWFAELWTILRPACCGRPAVIPRIWNT</sequence>
<protein>
    <recommendedName>
        <fullName evidence="1">Urease accessory protein UreD</fullName>
    </recommendedName>
</protein>
<feature type="chain" id="PRO_0000340449" description="Urease accessory protein UreD">
    <location>
        <begin position="1"/>
        <end position="288"/>
    </location>
</feature>
<evidence type="ECO:0000255" key="1">
    <source>
        <dbReference type="HAMAP-Rule" id="MF_01384"/>
    </source>
</evidence>
<keyword id="KW-0143">Chaperone</keyword>
<keyword id="KW-0963">Cytoplasm</keyword>
<keyword id="KW-0996">Nickel insertion</keyword>
<reference key="1">
    <citation type="journal article" date="2009" name="BMC Genomics">
        <title>Metabolic analysis of the soil microbe Dechloromonas aromatica str. RCB: indications of a surprisingly complex life-style and cryptic anaerobic pathways for aromatic degradation.</title>
        <authorList>
            <person name="Salinero K.K."/>
            <person name="Keller K."/>
            <person name="Feil W.S."/>
            <person name="Feil H."/>
            <person name="Trong S."/>
            <person name="Di Bartolo G."/>
            <person name="Lapidus A."/>
        </authorList>
    </citation>
    <scope>NUCLEOTIDE SEQUENCE [LARGE SCALE GENOMIC DNA]</scope>
    <source>
        <strain>RCB</strain>
    </source>
</reference>
<organism>
    <name type="scientific">Dechloromonas aromatica (strain RCB)</name>
    <dbReference type="NCBI Taxonomy" id="159087"/>
    <lineage>
        <taxon>Bacteria</taxon>
        <taxon>Pseudomonadati</taxon>
        <taxon>Pseudomonadota</taxon>
        <taxon>Betaproteobacteria</taxon>
        <taxon>Rhodocyclales</taxon>
        <taxon>Azonexaceae</taxon>
        <taxon>Dechloromonas</taxon>
    </lineage>
</organism>
<gene>
    <name evidence="1" type="primary">ureD</name>
    <name type="ordered locus">Daro_1430</name>
</gene>
<accession>Q47G52</accession>
<comment type="function">
    <text evidence="1">Required for maturation of urease via the functional incorporation of the urease nickel metallocenter.</text>
</comment>
<comment type="subunit">
    <text evidence="1">UreD, UreF and UreG form a complex that acts as a GTP-hydrolysis-dependent molecular chaperone, activating the urease apoprotein by helping to assemble the nickel containing metallocenter of UreC. The UreE protein probably delivers the nickel.</text>
</comment>
<comment type="subcellular location">
    <subcellularLocation>
        <location evidence="1">Cytoplasm</location>
    </subcellularLocation>
</comment>
<comment type="similarity">
    <text evidence="1">Belongs to the UreD family.</text>
</comment>
<proteinExistence type="inferred from homology"/>